<protein>
    <recommendedName>
        <fullName>Nucleoprotein</fullName>
        <ecNumber evidence="5">3.1.-.-</ecNumber>
    </recommendedName>
    <alternativeName>
        <fullName>Nucleocapsid protein</fullName>
        <shortName>Protein N</shortName>
    </alternativeName>
</protein>
<keyword id="KW-0167">Capsid protein</keyword>
<keyword id="KW-0143">Chaperone</keyword>
<keyword id="KW-0175">Coiled coil</keyword>
<keyword id="KW-0255">Endonuclease</keyword>
<keyword id="KW-1139">Helical capsid protein</keyword>
<keyword id="KW-1035">Host cytoplasm</keyword>
<keyword id="KW-1040">Host Golgi apparatus</keyword>
<keyword id="KW-0378">Hydrolase</keyword>
<keyword id="KW-0540">Nuclease</keyword>
<keyword id="KW-0687">Ribonucleoprotein</keyword>
<keyword id="KW-0694">RNA-binding</keyword>
<keyword id="KW-0543">Viral nucleoprotein</keyword>
<keyword id="KW-0946">Virion</keyword>
<gene>
    <name type="primary">N</name>
</gene>
<proteinExistence type="inferred from homology"/>
<comment type="function">
    <text evidence="1 2 5 8">Encapsidates the genome protecting it from nucleases (Probable). The encapsidated genomic RNA is termed the nucleocapsid (NC) and serves as template for transcription and replication (Probable). The nucleocapsid has a left-handed helical structure (By similarity). As a trimer, specifically binds and acts as a chaperone to unwind the panhandle structure formed by the viral RNA (vRNA) termini (By similarity). Involved in the transcription and replication initiation of vRNA by mediating primer annealing (By similarity). Plays a role in cap snatching by sequestering capped RNAs in P bodies for use by the viral RdRp during transcription initiation (By similarity). Substitutes for the cellular cap-binding complex (eIF4F) to preferentially facilitate the translation of capped mRNAs (By similarity). Initiates the translation by specifically binding to the cap and 40S ribosomal subunit (By similarity). Prevents the viral glycoprotein N (Gn) from autophagy-dependent breakdown maybe by blocking autophagosome formation (By similarity). Inhibits host EIF2AK2/PKR dimerization to prevent PKR-induced translational shutdown in cells and thus the activation of the antiviral state (By similarity). Also displays sequence-unspecific DNA endonuclease activity (By similarity).</text>
</comment>
<comment type="subunit">
    <text evidence="2 3 4 5">Homotrimer (By similarity). Homomultimer (By similarity). Homomultimerizes and binds to viral genomic RNA to form the nucleocapsid (By similarity). Interacts with host MAP1LC3B; this interaction participates to the protection of Gn from virus-triggered autophagy (By similarity). Interacts with host SNAP29; this interaction participates to the protection of glycoprotein N from virus-triggered autophagy (By similarity). Interacts (via N-terminus) with host RPS19; this interaction probably mediates the loading of the 40S ribosomal subunit on viral capped mRNA during N-mediated translation initiation (By similarity). Interacts with the viral RdRp (By similarity). Interacts with host SUMO1 (via N-terminus) (By similarity). Interacts with host DAXX (By similarity). Interacts with the viral glycoprotein N (via C-terminus) (By similarity). Interacts with the viral glycoprotein C (via C-terminus) (By similarity).</text>
</comment>
<comment type="subcellular location">
    <subcellularLocation>
        <location evidence="2">Virion</location>
    </subcellularLocation>
    <subcellularLocation>
        <location evidence="2">Host cytoplasm</location>
        <location evidence="2">Host perinuclear region</location>
    </subcellularLocation>
    <subcellularLocation>
        <location evidence="2">Host Golgi apparatus</location>
        <location evidence="2">Host cis-Golgi network</location>
    </subcellularLocation>
    <text evidence="2">Internal protein of virus particle.</text>
</comment>
<comment type="domain">
    <text evidence="2 5">The N-terminus is required for chaperone activity and, in trimeric form, this region likely serves in high affinity vRNA panhandle recognition (By similarity). The N-terminus also contains a coiled coil region, which probably participates in but is insufficient to initiate N trimerization (By similarity). The YxxL motif is indispensable for the interaction with host MAP1LC3B (By similarity). The central region is involved in specific RNA-binding (By similarity). Has distinct cap- and RNA-binding sites so it can bind simultaneously both the vRNA and mRNA cap (By similarity).</text>
</comment>
<comment type="similarity">
    <text evidence="8">Belongs to the hantavirus nucleocapsid protein family.</text>
</comment>
<reference key="1">
    <citation type="journal article" date="1993" name="Virus Res.">
        <title>Nucleotide and deduced amino acid sequences of the M and S genome segments of two Puumala virus isolates from Russia.</title>
        <authorList>
            <person name="Xiao S.Y."/>
            <person name="Spik K.W."/>
            <person name="Li D."/>
            <person name="Schmaljohn C.S."/>
        </authorList>
    </citation>
    <scope>NUCLEOTIDE SEQUENCE [GENOMIC RNA]</scope>
</reference>
<evidence type="ECO:0000250" key="1">
    <source>
        <dbReference type="UniProtKB" id="O36307"/>
    </source>
</evidence>
<evidence type="ECO:0000250" key="2">
    <source>
        <dbReference type="UniProtKB" id="P05133"/>
    </source>
</evidence>
<evidence type="ECO:0000250" key="3">
    <source>
        <dbReference type="UniProtKB" id="P27313"/>
    </source>
</evidence>
<evidence type="ECO:0000250" key="4">
    <source>
        <dbReference type="UniProtKB" id="Q88918"/>
    </source>
</evidence>
<evidence type="ECO:0000250" key="5">
    <source>
        <dbReference type="UniProtKB" id="Q89462"/>
    </source>
</evidence>
<evidence type="ECO:0000255" key="6"/>
<evidence type="ECO:0000256" key="7">
    <source>
        <dbReference type="SAM" id="MobiDB-lite"/>
    </source>
</evidence>
<evidence type="ECO:0000305" key="8"/>
<feature type="chain" id="PRO_0000222014" description="Nucleoprotein">
    <location>
        <begin position="1"/>
        <end position="433"/>
    </location>
</feature>
<feature type="region of interest" description="Viral panhandle binding" evidence="5">
    <location>
        <begin position="1"/>
        <end position="175"/>
    </location>
</feature>
<feature type="region of interest" description="Chaperone activity" evidence="5">
    <location>
        <begin position="1"/>
        <end position="100"/>
    </location>
</feature>
<feature type="region of interest" description="Homomultimerization" evidence="4">
    <location>
        <begin position="1"/>
        <end position="79"/>
    </location>
</feature>
<feature type="region of interest" description="RdRP binding" evidence="5">
    <location>
        <begin position="1"/>
        <end position="50"/>
    </location>
</feature>
<feature type="region of interest" description="Disordered" evidence="7">
    <location>
        <begin position="69"/>
        <end position="89"/>
    </location>
</feature>
<feature type="region of interest" description="Interaction with glycoprotein N" evidence="4">
    <location>
        <begin position="80"/>
        <end position="248"/>
    </location>
</feature>
<feature type="region of interest" description="Homomultimerization" evidence="2">
    <location>
        <begin position="100"/>
        <end position="125"/>
    </location>
</feature>
<feature type="region of interest" description="Interaction with host RPS19" evidence="5">
    <location>
        <begin position="150"/>
        <end position="175"/>
    </location>
</feature>
<feature type="region of interest" description="Viral RNA-binding" evidence="2">
    <location>
        <begin position="175"/>
        <end position="217"/>
    </location>
</feature>
<feature type="region of interest" description="Interaction with host UBE2I/UBC9" evidence="2">
    <location>
        <begin position="188"/>
        <end position="191"/>
    </location>
</feature>
<feature type="region of interest" description="Interaction with host DAXX" evidence="3">
    <location>
        <begin position="377"/>
        <end position="433"/>
    </location>
</feature>
<feature type="region of interest" description="Homomultimerization" evidence="4">
    <location>
        <begin position="377"/>
        <end position="425"/>
    </location>
</feature>
<feature type="coiled-coil region" evidence="6">
    <location>
        <begin position="4"/>
        <end position="71"/>
    </location>
</feature>
<feature type="short sequence motif" description="YxxL" evidence="2">
    <location>
        <begin position="178"/>
        <end position="181"/>
    </location>
</feature>
<feature type="compositionally biased region" description="Basic and acidic residues" evidence="7">
    <location>
        <begin position="69"/>
        <end position="78"/>
    </location>
</feature>
<feature type="site" description="Important for the endonuclease activity" evidence="5">
    <location>
        <position position="88"/>
    </location>
</feature>
<feature type="site" description="Important for the endonuclease activity" evidence="5">
    <location>
        <position position="103"/>
    </location>
</feature>
<organismHost>
    <name type="scientific">Homo sapiens</name>
    <name type="common">Human</name>
    <dbReference type="NCBI Taxonomy" id="9606"/>
</organismHost>
<organismHost>
    <name type="scientific">Myodes glareolus</name>
    <name type="common">Bank vole</name>
    <name type="synonym">Clethrionomys glareolus</name>
    <dbReference type="NCBI Taxonomy" id="447135"/>
</organismHost>
<accession>P41269</accession>
<organism>
    <name type="scientific">Puumala virus (strain K27)</name>
    <dbReference type="NCBI Taxonomy" id="39000"/>
    <lineage>
        <taxon>Viruses</taxon>
        <taxon>Riboviria</taxon>
        <taxon>Orthornavirae</taxon>
        <taxon>Negarnaviricota</taxon>
        <taxon>Polyploviricotina</taxon>
        <taxon>Ellioviricetes</taxon>
        <taxon>Bunyavirales</taxon>
        <taxon>Hantaviridae</taxon>
        <taxon>Mammantavirinae</taxon>
        <taxon>Orthohantavirus</taxon>
        <taxon>Orthohantavirus puumalaense</taxon>
    </lineage>
</organism>
<dbReference type="EC" id="3.1.-.-" evidence="5"/>
<dbReference type="EMBL" id="L08804">
    <property type="protein sequence ID" value="AAC37849.1"/>
    <property type="molecule type" value="Genomic_RNA"/>
</dbReference>
<dbReference type="SMR" id="P41269"/>
<dbReference type="GO" id="GO:0019029">
    <property type="term" value="C:helical viral capsid"/>
    <property type="evidence" value="ECO:0007669"/>
    <property type="project" value="UniProtKB-KW"/>
</dbReference>
<dbReference type="GO" id="GO:0044177">
    <property type="term" value="C:host cell Golgi apparatus"/>
    <property type="evidence" value="ECO:0007669"/>
    <property type="project" value="UniProtKB-SubCell"/>
</dbReference>
<dbReference type="GO" id="GO:0044220">
    <property type="term" value="C:host cell perinuclear region of cytoplasm"/>
    <property type="evidence" value="ECO:0007669"/>
    <property type="project" value="UniProtKB-SubCell"/>
</dbReference>
<dbReference type="GO" id="GO:1990904">
    <property type="term" value="C:ribonucleoprotein complex"/>
    <property type="evidence" value="ECO:0007669"/>
    <property type="project" value="UniProtKB-KW"/>
</dbReference>
<dbReference type="GO" id="GO:0019013">
    <property type="term" value="C:viral nucleocapsid"/>
    <property type="evidence" value="ECO:0007669"/>
    <property type="project" value="UniProtKB-KW"/>
</dbReference>
<dbReference type="GO" id="GO:0004519">
    <property type="term" value="F:endonuclease activity"/>
    <property type="evidence" value="ECO:0007669"/>
    <property type="project" value="UniProtKB-KW"/>
</dbReference>
<dbReference type="GO" id="GO:0003723">
    <property type="term" value="F:RNA binding"/>
    <property type="evidence" value="ECO:0007669"/>
    <property type="project" value="UniProtKB-KW"/>
</dbReference>
<dbReference type="Gene3D" id="1.20.58.90">
    <property type="match status" value="1"/>
</dbReference>
<dbReference type="InterPro" id="IPR002214">
    <property type="entry name" value="Hanta_nucleocap"/>
</dbReference>
<dbReference type="Pfam" id="PF00846">
    <property type="entry name" value="Hanta_nucleocap"/>
    <property type="match status" value="1"/>
</dbReference>
<dbReference type="PIRSF" id="PIRSF003949">
    <property type="entry name" value="N_HantaV"/>
    <property type="match status" value="1"/>
</dbReference>
<sequence>MSDLTDIQEEITRHEQQLVVARQKLKDAERAVEVYPDDVIKNTLQARQQTVSALEDKLADYKRRMADAVSRKKMDTKPTDPTGIEPDDHLKERSSLRYGNVLDVNAIDIEEPSGQTADWYTIGVYVIGFTIPIILKALYMLSTRGRQTVKENKGTRIRFKDDTSFEDINGIRRPKHLYVSMPTAQSTMKAEELTPGRFRTIVCGLFPTQIQVRNIMSPVMGVIGFSFFVKDWPEKIREFMEKECPFIKPEVKPGTPAQEVEFLKRNRVYFMTRQDVLDKNHVADIDKLIDYAASGDPTSPDDIKSPNAPWVFACAPDRSPPTCIYVAGMAELGAFFSILQDMRNTIMASKTVGTAEEKLKRKSSFYQSYLRRTQSMGIQLDQRIILLYMLEWGKEMVDHFHLGDDMDPELRGLAQSLIDQKVKEISNQEPLKI</sequence>
<name>NCAP_PUUMK</name>